<evidence type="ECO:0000255" key="1">
    <source>
        <dbReference type="HAMAP-Rule" id="MF_00412"/>
    </source>
</evidence>
<evidence type="ECO:0000305" key="2"/>
<accession>P94872</accession>
<organism>
    <name type="scientific">Leptospira interrogans serogroup Icterohaemorrhagiae serovar Lai (strain 56601)</name>
    <dbReference type="NCBI Taxonomy" id="189518"/>
    <lineage>
        <taxon>Bacteria</taxon>
        <taxon>Pseudomonadati</taxon>
        <taxon>Spirochaetota</taxon>
        <taxon>Spirochaetia</taxon>
        <taxon>Leptospirales</taxon>
        <taxon>Leptospiraceae</taxon>
        <taxon>Leptospira</taxon>
    </lineage>
</organism>
<dbReference type="EC" id="1.2.1.41" evidence="1"/>
<dbReference type="EMBL" id="U73651">
    <property type="protein sequence ID" value="AAB39854.1"/>
    <property type="molecule type" value="Genomic_DNA"/>
</dbReference>
<dbReference type="EMBL" id="AE010300">
    <property type="protein sequence ID" value="AAN48053.1"/>
    <property type="molecule type" value="Genomic_DNA"/>
</dbReference>
<dbReference type="RefSeq" id="NP_711035.1">
    <property type="nucleotide sequence ID" value="NC_004342.2"/>
</dbReference>
<dbReference type="RefSeq" id="WP_000658464.1">
    <property type="nucleotide sequence ID" value="NC_004342.2"/>
</dbReference>
<dbReference type="SMR" id="P94872"/>
<dbReference type="FunCoup" id="P94872">
    <property type="interactions" value="399"/>
</dbReference>
<dbReference type="STRING" id="189518.LA_0854"/>
<dbReference type="PaxDb" id="189518-LA_0854"/>
<dbReference type="EnsemblBacteria" id="AAN48053">
    <property type="protein sequence ID" value="AAN48053"/>
    <property type="gene ID" value="LA_0854"/>
</dbReference>
<dbReference type="KEGG" id="lil:LA_0854"/>
<dbReference type="PATRIC" id="fig|189518.3.peg.858"/>
<dbReference type="HOGENOM" id="CLU_030231_0_0_12"/>
<dbReference type="InParanoid" id="P94872"/>
<dbReference type="OrthoDB" id="9809970at2"/>
<dbReference type="UniPathway" id="UPA00098">
    <property type="reaction ID" value="UER00360"/>
</dbReference>
<dbReference type="Proteomes" id="UP000001408">
    <property type="component" value="Chromosome I"/>
</dbReference>
<dbReference type="GO" id="GO:0005737">
    <property type="term" value="C:cytoplasm"/>
    <property type="evidence" value="ECO:0007669"/>
    <property type="project" value="UniProtKB-SubCell"/>
</dbReference>
<dbReference type="GO" id="GO:0004350">
    <property type="term" value="F:glutamate-5-semialdehyde dehydrogenase activity"/>
    <property type="evidence" value="ECO:0000318"/>
    <property type="project" value="GO_Central"/>
</dbReference>
<dbReference type="GO" id="GO:0050661">
    <property type="term" value="F:NADP binding"/>
    <property type="evidence" value="ECO:0007669"/>
    <property type="project" value="InterPro"/>
</dbReference>
<dbReference type="GO" id="GO:0055129">
    <property type="term" value="P:L-proline biosynthetic process"/>
    <property type="evidence" value="ECO:0007669"/>
    <property type="project" value="UniProtKB-UniRule"/>
</dbReference>
<dbReference type="CDD" id="cd07079">
    <property type="entry name" value="ALDH_F18-19_ProA-GPR"/>
    <property type="match status" value="1"/>
</dbReference>
<dbReference type="FunFam" id="3.40.309.10:FF:000028">
    <property type="entry name" value="Gamma-glutamyl phosphate reductase"/>
    <property type="match status" value="1"/>
</dbReference>
<dbReference type="Gene3D" id="3.40.605.10">
    <property type="entry name" value="Aldehyde Dehydrogenase, Chain A, domain 1"/>
    <property type="match status" value="1"/>
</dbReference>
<dbReference type="Gene3D" id="3.40.309.10">
    <property type="entry name" value="Aldehyde Dehydrogenase, Chain A, domain 2"/>
    <property type="match status" value="1"/>
</dbReference>
<dbReference type="HAMAP" id="MF_00412">
    <property type="entry name" value="ProA"/>
    <property type="match status" value="1"/>
</dbReference>
<dbReference type="InterPro" id="IPR016161">
    <property type="entry name" value="Ald_DH/histidinol_DH"/>
</dbReference>
<dbReference type="InterPro" id="IPR016163">
    <property type="entry name" value="Ald_DH_C"/>
</dbReference>
<dbReference type="InterPro" id="IPR016162">
    <property type="entry name" value="Ald_DH_N"/>
</dbReference>
<dbReference type="InterPro" id="IPR015590">
    <property type="entry name" value="Aldehyde_DH_dom"/>
</dbReference>
<dbReference type="InterPro" id="IPR020593">
    <property type="entry name" value="G-glutamylP_reductase_CS"/>
</dbReference>
<dbReference type="InterPro" id="IPR012134">
    <property type="entry name" value="Glu-5-SA_DH"/>
</dbReference>
<dbReference type="InterPro" id="IPR000965">
    <property type="entry name" value="GPR_dom"/>
</dbReference>
<dbReference type="NCBIfam" id="NF001221">
    <property type="entry name" value="PRK00197.1"/>
    <property type="match status" value="1"/>
</dbReference>
<dbReference type="NCBIfam" id="TIGR00407">
    <property type="entry name" value="proA"/>
    <property type="match status" value="1"/>
</dbReference>
<dbReference type="PANTHER" id="PTHR11063:SF8">
    <property type="entry name" value="DELTA-1-PYRROLINE-5-CARBOXYLATE SYNTHASE"/>
    <property type="match status" value="1"/>
</dbReference>
<dbReference type="PANTHER" id="PTHR11063">
    <property type="entry name" value="GLUTAMATE SEMIALDEHYDE DEHYDROGENASE"/>
    <property type="match status" value="1"/>
</dbReference>
<dbReference type="Pfam" id="PF00171">
    <property type="entry name" value="Aldedh"/>
    <property type="match status" value="1"/>
</dbReference>
<dbReference type="PIRSF" id="PIRSF000151">
    <property type="entry name" value="GPR"/>
    <property type="match status" value="1"/>
</dbReference>
<dbReference type="SUPFAM" id="SSF53720">
    <property type="entry name" value="ALDH-like"/>
    <property type="match status" value="1"/>
</dbReference>
<dbReference type="PROSITE" id="PS01223">
    <property type="entry name" value="PROA"/>
    <property type="match status" value="1"/>
</dbReference>
<comment type="function">
    <text evidence="1">Catalyzes the NADPH-dependent reduction of L-glutamate 5-phosphate into L-glutamate 5-semialdehyde and phosphate. The product spontaneously undergoes cyclization to form 1-pyrroline-5-carboxylate.</text>
</comment>
<comment type="catalytic activity">
    <reaction evidence="1">
        <text>L-glutamate 5-semialdehyde + phosphate + NADP(+) = L-glutamyl 5-phosphate + NADPH + H(+)</text>
        <dbReference type="Rhea" id="RHEA:19541"/>
        <dbReference type="ChEBI" id="CHEBI:15378"/>
        <dbReference type="ChEBI" id="CHEBI:43474"/>
        <dbReference type="ChEBI" id="CHEBI:57783"/>
        <dbReference type="ChEBI" id="CHEBI:58066"/>
        <dbReference type="ChEBI" id="CHEBI:58274"/>
        <dbReference type="ChEBI" id="CHEBI:58349"/>
        <dbReference type="EC" id="1.2.1.41"/>
    </reaction>
</comment>
<comment type="pathway">
    <text evidence="1">Amino-acid biosynthesis; L-proline biosynthesis; L-glutamate 5-semialdehyde from L-glutamate: step 2/2.</text>
</comment>
<comment type="subcellular location">
    <subcellularLocation>
        <location evidence="1">Cytoplasm</location>
    </subcellularLocation>
</comment>
<comment type="similarity">
    <text evidence="1">Belongs to the gamma-glutamyl phosphate reductase family.</text>
</comment>
<keyword id="KW-0028">Amino-acid biosynthesis</keyword>
<keyword id="KW-0963">Cytoplasm</keyword>
<keyword id="KW-0521">NADP</keyword>
<keyword id="KW-0560">Oxidoreductase</keyword>
<keyword id="KW-0641">Proline biosynthesis</keyword>
<keyword id="KW-1185">Reference proteome</keyword>
<gene>
    <name evidence="1" type="primary">proA</name>
    <name type="ordered locus">LA_0854</name>
</gene>
<protein>
    <recommendedName>
        <fullName evidence="1">Gamma-glutamyl phosphate reductase</fullName>
        <shortName evidence="1">GPR</shortName>
        <ecNumber evidence="1">1.2.1.41</ecNumber>
    </recommendedName>
    <alternativeName>
        <fullName evidence="1">Glutamate-5-semialdehyde dehydrogenase</fullName>
    </alternativeName>
    <alternativeName>
        <fullName evidence="1">Glutamyl-gamma-semialdehyde dehydrogenase</fullName>
        <shortName evidence="1">GSA dehydrogenase</shortName>
    </alternativeName>
</protein>
<sequence length="416" mass="45768">MKEIEYVQDLCSRAKKASKVLKQLSSSKKNKVLLSLADLLEKRKAEILLANELDLKDGKEKKLSSALMDRLLLNEKRIFSMASAVREIAALPDPIGEVTRGITLPNGLELVTRRVPLGVVMVIYESRPNVTIDVGALSFKSGNACILRGGSEAFYSNEILIKLFHEILIKEEIDIGSVVFVDKTDRSFMIPFFQQTSLIDIVVPRGGEGLIRFVSENSKIPVVKHDKGVCNLYIDQDADPEKVIPIVINSKVQRPGVCNSTENLILHNGYPFRKELLEALAKEGVELLLDPSSLALYPNGKPVKEQDYLEEFLDLRLSVKTVSSLEEALAFIEKTSSGHTEAIVTEDLNTARIFTNSLDSAALFINCSTRFHDGGEFGLGAEVGISTGKLHVRGPMGLVHLTTTTTYVTGNGQIRG</sequence>
<feature type="chain" id="PRO_0000189743" description="Gamma-glutamyl phosphate reductase">
    <location>
        <begin position="1"/>
        <end position="416"/>
    </location>
</feature>
<feature type="sequence conflict" description="In Ref. 1; AAB39854." evidence="2" ref="1">
    <original>V</original>
    <variation>I</variation>
    <location>
        <position position="32"/>
    </location>
</feature>
<feature type="sequence conflict" description="In Ref. 1; AAB39854." evidence="2" ref="1">
    <original>N</original>
    <variation>K</variation>
    <location>
        <position position="299"/>
    </location>
</feature>
<feature type="sequence conflict" description="In Ref. 1; AAB39854." evidence="2" ref="1">
    <original>E</original>
    <variation>Q</variation>
    <location>
        <position position="305"/>
    </location>
</feature>
<proteinExistence type="inferred from homology"/>
<reference key="1">
    <citation type="submission" date="1996-10" db="EMBL/GenBank/DDBJ databases">
        <authorList>
            <person name="Stamm L.V."/>
            <person name="Barnes N.Y."/>
        </authorList>
    </citation>
    <scope>NUCLEOTIDE SEQUENCE [GENOMIC DNA]</scope>
    <source>
        <strain>Serogroup Icterohaemorrhagiae</strain>
    </source>
</reference>
<reference key="2">
    <citation type="journal article" date="2003" name="Nature">
        <title>Unique physiological and pathogenic features of Leptospira interrogans revealed by whole-genome sequencing.</title>
        <authorList>
            <person name="Ren S.-X."/>
            <person name="Fu G."/>
            <person name="Jiang X.-G."/>
            <person name="Zeng R."/>
            <person name="Miao Y.-G."/>
            <person name="Xu H."/>
            <person name="Zhang Y.-X."/>
            <person name="Xiong H."/>
            <person name="Lu G."/>
            <person name="Lu L.-F."/>
            <person name="Jiang H.-Q."/>
            <person name="Jia J."/>
            <person name="Tu Y.-F."/>
            <person name="Jiang J.-X."/>
            <person name="Gu W.-Y."/>
            <person name="Zhang Y.-Q."/>
            <person name="Cai Z."/>
            <person name="Sheng H.-H."/>
            <person name="Yin H.-F."/>
            <person name="Zhang Y."/>
            <person name="Zhu G.-F."/>
            <person name="Wan M."/>
            <person name="Huang H.-L."/>
            <person name="Qian Z."/>
            <person name="Wang S.-Y."/>
            <person name="Ma W."/>
            <person name="Yao Z.-J."/>
            <person name="Shen Y."/>
            <person name="Qiang B.-Q."/>
            <person name="Xia Q.-C."/>
            <person name="Guo X.-K."/>
            <person name="Danchin A."/>
            <person name="Saint Girons I."/>
            <person name="Somerville R.L."/>
            <person name="Wen Y.-M."/>
            <person name="Shi M.-H."/>
            <person name="Chen Z."/>
            <person name="Xu J.-G."/>
            <person name="Zhao G.-P."/>
        </authorList>
    </citation>
    <scope>NUCLEOTIDE SEQUENCE [LARGE SCALE GENOMIC DNA]</scope>
    <source>
        <strain>56601</strain>
    </source>
</reference>
<name>PROA_LEPIN</name>